<sequence length="238" mass="25241">MTQPRQALLDAFGVDLPDELLSLALTHRSYAYEHGGLPTNERLEFLGDAVLSLTITDELFHRHPDRSEGDLAKLRASVVNTQALAYVARNLSDGGLGVYLLLGRGETNTGGADKSSILADGMESLLGAIYLHHGIEVARQVILRLFGTLLDAAPTLGAGLDWKTSLQELTAARGMGVPSYVVTSTGPDHDKEFTAVVVVMDTEYGSGIGHSKKEAEQKAASAAWKALDVLGGVGKTSV</sequence>
<evidence type="ECO:0000255" key="1">
    <source>
        <dbReference type="HAMAP-Rule" id="MF_00104"/>
    </source>
</evidence>
<reference key="1">
    <citation type="journal article" date="2001" name="Nature">
        <title>Massive gene decay in the leprosy bacillus.</title>
        <authorList>
            <person name="Cole S.T."/>
            <person name="Eiglmeier K."/>
            <person name="Parkhill J."/>
            <person name="James K.D."/>
            <person name="Thomson N.R."/>
            <person name="Wheeler P.R."/>
            <person name="Honore N."/>
            <person name="Garnier T."/>
            <person name="Churcher C.M."/>
            <person name="Harris D.E."/>
            <person name="Mungall K.L."/>
            <person name="Basham D."/>
            <person name="Brown D."/>
            <person name="Chillingworth T."/>
            <person name="Connor R."/>
            <person name="Davies R.M."/>
            <person name="Devlin K."/>
            <person name="Duthoy S."/>
            <person name="Feltwell T."/>
            <person name="Fraser A."/>
            <person name="Hamlin N."/>
            <person name="Holroyd S."/>
            <person name="Hornsby T."/>
            <person name="Jagels K."/>
            <person name="Lacroix C."/>
            <person name="Maclean J."/>
            <person name="Moule S."/>
            <person name="Murphy L.D."/>
            <person name="Oliver K."/>
            <person name="Quail M.A."/>
            <person name="Rajandream M.A."/>
            <person name="Rutherford K.M."/>
            <person name="Rutter S."/>
            <person name="Seeger K."/>
            <person name="Simon S."/>
            <person name="Simmonds M."/>
            <person name="Skelton J."/>
            <person name="Squares R."/>
            <person name="Squares S."/>
            <person name="Stevens K."/>
            <person name="Taylor K."/>
            <person name="Whitehead S."/>
            <person name="Woodward J.R."/>
            <person name="Barrell B.G."/>
        </authorList>
    </citation>
    <scope>NUCLEOTIDE SEQUENCE [LARGE SCALE GENOMIC DNA]</scope>
    <source>
        <strain>TN</strain>
    </source>
</reference>
<proteinExistence type="inferred from homology"/>
<keyword id="KW-0963">Cytoplasm</keyword>
<keyword id="KW-0255">Endonuclease</keyword>
<keyword id="KW-0378">Hydrolase</keyword>
<keyword id="KW-0460">Magnesium</keyword>
<keyword id="KW-0479">Metal-binding</keyword>
<keyword id="KW-0507">mRNA processing</keyword>
<keyword id="KW-0540">Nuclease</keyword>
<keyword id="KW-1185">Reference proteome</keyword>
<keyword id="KW-0694">RNA-binding</keyword>
<keyword id="KW-0698">rRNA processing</keyword>
<keyword id="KW-0699">rRNA-binding</keyword>
<keyword id="KW-0819">tRNA processing</keyword>
<organism>
    <name type="scientific">Mycobacterium leprae (strain TN)</name>
    <dbReference type="NCBI Taxonomy" id="272631"/>
    <lineage>
        <taxon>Bacteria</taxon>
        <taxon>Bacillati</taxon>
        <taxon>Actinomycetota</taxon>
        <taxon>Actinomycetes</taxon>
        <taxon>Mycobacteriales</taxon>
        <taxon>Mycobacteriaceae</taxon>
        <taxon>Mycobacterium</taxon>
    </lineage>
</organism>
<accession>O69469</accession>
<feature type="chain" id="PRO_0000180412" description="Ribonuclease 3">
    <location>
        <begin position="1"/>
        <end position="238"/>
    </location>
</feature>
<feature type="domain" description="RNase III" evidence="1">
    <location>
        <begin position="4"/>
        <end position="134"/>
    </location>
</feature>
<feature type="domain" description="DRBM" evidence="1">
    <location>
        <begin position="161"/>
        <end position="229"/>
    </location>
</feature>
<feature type="active site" evidence="1">
    <location>
        <position position="48"/>
    </location>
</feature>
<feature type="active site" evidence="1">
    <location>
        <position position="123"/>
    </location>
</feature>
<feature type="binding site" evidence="1">
    <location>
        <position position="44"/>
    </location>
    <ligand>
        <name>Mg(2+)</name>
        <dbReference type="ChEBI" id="CHEBI:18420"/>
    </ligand>
</feature>
<feature type="binding site" evidence="1">
    <location>
        <position position="120"/>
    </location>
    <ligand>
        <name>Mg(2+)</name>
        <dbReference type="ChEBI" id="CHEBI:18420"/>
    </ligand>
</feature>
<feature type="binding site" evidence="1">
    <location>
        <position position="123"/>
    </location>
    <ligand>
        <name>Mg(2+)</name>
        <dbReference type="ChEBI" id="CHEBI:18420"/>
    </ligand>
</feature>
<name>RNC_MYCLE</name>
<protein>
    <recommendedName>
        <fullName evidence="1">Ribonuclease 3</fullName>
        <ecNumber evidence="1">3.1.26.3</ecNumber>
    </recommendedName>
    <alternativeName>
        <fullName evidence="1">Ribonuclease III</fullName>
        <shortName evidence="1">RNase III</shortName>
    </alternativeName>
</protein>
<comment type="function">
    <text evidence="1">Digests double-stranded RNA. Involved in the processing of primary rRNA transcript to yield the immediate precursors to the large and small rRNAs (23S and 16S). Processes some mRNAs, and tRNAs when they are encoded in the rRNA operon. Processes pre-crRNA and tracrRNA of type II CRISPR loci if present in the organism.</text>
</comment>
<comment type="catalytic activity">
    <reaction evidence="1">
        <text>Endonucleolytic cleavage to 5'-phosphomonoester.</text>
        <dbReference type="EC" id="3.1.26.3"/>
    </reaction>
</comment>
<comment type="cofactor">
    <cofactor evidence="1">
        <name>Mg(2+)</name>
        <dbReference type="ChEBI" id="CHEBI:18420"/>
    </cofactor>
</comment>
<comment type="subunit">
    <text evidence="1">Homodimer.</text>
</comment>
<comment type="subcellular location">
    <subcellularLocation>
        <location evidence="1">Cytoplasm</location>
    </subcellularLocation>
</comment>
<comment type="similarity">
    <text evidence="1">Belongs to the ribonuclease III family.</text>
</comment>
<dbReference type="EC" id="3.1.26.3" evidence="1"/>
<dbReference type="EMBL" id="AL023635">
    <property type="protein sequence ID" value="CAA19196.1"/>
    <property type="molecule type" value="Genomic_DNA"/>
</dbReference>
<dbReference type="EMBL" id="AL583923">
    <property type="protein sequence ID" value="CAC30612.1"/>
    <property type="molecule type" value="Genomic_DNA"/>
</dbReference>
<dbReference type="PIR" id="T44706">
    <property type="entry name" value="T44706"/>
</dbReference>
<dbReference type="RefSeq" id="NP_302140.1">
    <property type="nucleotide sequence ID" value="NC_002677.1"/>
</dbReference>
<dbReference type="RefSeq" id="WP_010908461.1">
    <property type="nucleotide sequence ID" value="NC_002677.1"/>
</dbReference>
<dbReference type="SMR" id="O69469"/>
<dbReference type="STRING" id="272631.gene:17575502"/>
<dbReference type="KEGG" id="mle:ML1659"/>
<dbReference type="PATRIC" id="fig|272631.5.peg.3128"/>
<dbReference type="Leproma" id="ML1659"/>
<dbReference type="eggNOG" id="COG0571">
    <property type="taxonomic scope" value="Bacteria"/>
</dbReference>
<dbReference type="HOGENOM" id="CLU_000907_1_2_11"/>
<dbReference type="OrthoDB" id="9805026at2"/>
<dbReference type="Proteomes" id="UP000000806">
    <property type="component" value="Chromosome"/>
</dbReference>
<dbReference type="GO" id="GO:0005737">
    <property type="term" value="C:cytoplasm"/>
    <property type="evidence" value="ECO:0007669"/>
    <property type="project" value="UniProtKB-SubCell"/>
</dbReference>
<dbReference type="GO" id="GO:0003725">
    <property type="term" value="F:double-stranded RNA binding"/>
    <property type="evidence" value="ECO:0007669"/>
    <property type="project" value="TreeGrafter"/>
</dbReference>
<dbReference type="GO" id="GO:0046872">
    <property type="term" value="F:metal ion binding"/>
    <property type="evidence" value="ECO:0007669"/>
    <property type="project" value="UniProtKB-KW"/>
</dbReference>
<dbReference type="GO" id="GO:0004525">
    <property type="term" value="F:ribonuclease III activity"/>
    <property type="evidence" value="ECO:0007669"/>
    <property type="project" value="UniProtKB-UniRule"/>
</dbReference>
<dbReference type="GO" id="GO:0019843">
    <property type="term" value="F:rRNA binding"/>
    <property type="evidence" value="ECO:0007669"/>
    <property type="project" value="UniProtKB-KW"/>
</dbReference>
<dbReference type="GO" id="GO:0006397">
    <property type="term" value="P:mRNA processing"/>
    <property type="evidence" value="ECO:0007669"/>
    <property type="project" value="UniProtKB-UniRule"/>
</dbReference>
<dbReference type="GO" id="GO:0010468">
    <property type="term" value="P:regulation of gene expression"/>
    <property type="evidence" value="ECO:0007669"/>
    <property type="project" value="TreeGrafter"/>
</dbReference>
<dbReference type="GO" id="GO:0006364">
    <property type="term" value="P:rRNA processing"/>
    <property type="evidence" value="ECO:0007669"/>
    <property type="project" value="UniProtKB-UniRule"/>
</dbReference>
<dbReference type="GO" id="GO:0008033">
    <property type="term" value="P:tRNA processing"/>
    <property type="evidence" value="ECO:0007669"/>
    <property type="project" value="UniProtKB-KW"/>
</dbReference>
<dbReference type="CDD" id="cd10845">
    <property type="entry name" value="DSRM_RNAse_III_family"/>
    <property type="match status" value="1"/>
</dbReference>
<dbReference type="CDD" id="cd00593">
    <property type="entry name" value="RIBOc"/>
    <property type="match status" value="1"/>
</dbReference>
<dbReference type="FunFam" id="1.10.1520.10:FF:000001">
    <property type="entry name" value="Ribonuclease 3"/>
    <property type="match status" value="1"/>
</dbReference>
<dbReference type="FunFam" id="3.30.160.20:FF:000003">
    <property type="entry name" value="Ribonuclease 3"/>
    <property type="match status" value="1"/>
</dbReference>
<dbReference type="Gene3D" id="3.30.160.20">
    <property type="match status" value="1"/>
</dbReference>
<dbReference type="Gene3D" id="1.10.1520.10">
    <property type="entry name" value="Ribonuclease III domain"/>
    <property type="match status" value="1"/>
</dbReference>
<dbReference type="HAMAP" id="MF_00104">
    <property type="entry name" value="RNase_III"/>
    <property type="match status" value="1"/>
</dbReference>
<dbReference type="InterPro" id="IPR014720">
    <property type="entry name" value="dsRBD_dom"/>
</dbReference>
<dbReference type="InterPro" id="IPR011907">
    <property type="entry name" value="RNase_III"/>
</dbReference>
<dbReference type="InterPro" id="IPR000999">
    <property type="entry name" value="RNase_III_dom"/>
</dbReference>
<dbReference type="InterPro" id="IPR036389">
    <property type="entry name" value="RNase_III_sf"/>
</dbReference>
<dbReference type="NCBIfam" id="TIGR02191">
    <property type="entry name" value="RNaseIII"/>
    <property type="match status" value="1"/>
</dbReference>
<dbReference type="PANTHER" id="PTHR11207:SF0">
    <property type="entry name" value="RIBONUCLEASE 3"/>
    <property type="match status" value="1"/>
</dbReference>
<dbReference type="PANTHER" id="PTHR11207">
    <property type="entry name" value="RIBONUCLEASE III"/>
    <property type="match status" value="1"/>
</dbReference>
<dbReference type="Pfam" id="PF00035">
    <property type="entry name" value="dsrm"/>
    <property type="match status" value="1"/>
</dbReference>
<dbReference type="Pfam" id="PF14622">
    <property type="entry name" value="Ribonucleas_3_3"/>
    <property type="match status" value="1"/>
</dbReference>
<dbReference type="SMART" id="SM00358">
    <property type="entry name" value="DSRM"/>
    <property type="match status" value="1"/>
</dbReference>
<dbReference type="SMART" id="SM00535">
    <property type="entry name" value="RIBOc"/>
    <property type="match status" value="1"/>
</dbReference>
<dbReference type="SUPFAM" id="SSF54768">
    <property type="entry name" value="dsRNA-binding domain-like"/>
    <property type="match status" value="1"/>
</dbReference>
<dbReference type="SUPFAM" id="SSF69065">
    <property type="entry name" value="RNase III domain-like"/>
    <property type="match status" value="1"/>
</dbReference>
<dbReference type="PROSITE" id="PS50137">
    <property type="entry name" value="DS_RBD"/>
    <property type="match status" value="1"/>
</dbReference>
<dbReference type="PROSITE" id="PS00517">
    <property type="entry name" value="RNASE_3_1"/>
    <property type="match status" value="1"/>
</dbReference>
<dbReference type="PROSITE" id="PS50142">
    <property type="entry name" value="RNASE_3_2"/>
    <property type="match status" value="1"/>
</dbReference>
<gene>
    <name evidence="1" type="primary">rnc</name>
    <name type="ordered locus">ML1659</name>
    <name type="ORF">MLCB1243.15</name>
</gene>